<dbReference type="EMBL" id="CP000111">
    <property type="protein sequence ID" value="ABB49081.1"/>
    <property type="molecule type" value="Genomic_DNA"/>
</dbReference>
<dbReference type="RefSeq" id="WP_011375585.1">
    <property type="nucleotide sequence ID" value="NC_007577.1"/>
</dbReference>
<dbReference type="SMR" id="Q31DG4"/>
<dbReference type="STRING" id="74546.PMT9312_0020"/>
<dbReference type="KEGG" id="pmi:PMT9312_0020"/>
<dbReference type="eggNOG" id="COG0718">
    <property type="taxonomic scope" value="Bacteria"/>
</dbReference>
<dbReference type="HOGENOM" id="CLU_140930_0_1_3"/>
<dbReference type="OrthoDB" id="487780at2"/>
<dbReference type="Proteomes" id="UP000002715">
    <property type="component" value="Chromosome"/>
</dbReference>
<dbReference type="GO" id="GO:0043590">
    <property type="term" value="C:bacterial nucleoid"/>
    <property type="evidence" value="ECO:0007669"/>
    <property type="project" value="UniProtKB-UniRule"/>
</dbReference>
<dbReference type="GO" id="GO:0005829">
    <property type="term" value="C:cytosol"/>
    <property type="evidence" value="ECO:0007669"/>
    <property type="project" value="TreeGrafter"/>
</dbReference>
<dbReference type="GO" id="GO:0003677">
    <property type="term" value="F:DNA binding"/>
    <property type="evidence" value="ECO:0007669"/>
    <property type="project" value="UniProtKB-UniRule"/>
</dbReference>
<dbReference type="Gene3D" id="3.30.1310.10">
    <property type="entry name" value="Nucleoid-associated protein YbaB-like domain"/>
    <property type="match status" value="1"/>
</dbReference>
<dbReference type="HAMAP" id="MF_00274">
    <property type="entry name" value="DNA_YbaB_EbfC"/>
    <property type="match status" value="1"/>
</dbReference>
<dbReference type="InterPro" id="IPR036894">
    <property type="entry name" value="YbaB-like_sf"/>
</dbReference>
<dbReference type="InterPro" id="IPR004401">
    <property type="entry name" value="YbaB/EbfC"/>
</dbReference>
<dbReference type="NCBIfam" id="TIGR00103">
    <property type="entry name" value="DNA_YbaB_EbfC"/>
    <property type="match status" value="1"/>
</dbReference>
<dbReference type="PANTHER" id="PTHR33449">
    <property type="entry name" value="NUCLEOID-ASSOCIATED PROTEIN YBAB"/>
    <property type="match status" value="1"/>
</dbReference>
<dbReference type="PANTHER" id="PTHR33449:SF1">
    <property type="entry name" value="NUCLEOID-ASSOCIATED PROTEIN YBAB"/>
    <property type="match status" value="1"/>
</dbReference>
<dbReference type="Pfam" id="PF02575">
    <property type="entry name" value="YbaB_DNA_bd"/>
    <property type="match status" value="1"/>
</dbReference>
<dbReference type="PIRSF" id="PIRSF004555">
    <property type="entry name" value="UCP004555"/>
    <property type="match status" value="1"/>
</dbReference>
<dbReference type="SUPFAM" id="SSF82607">
    <property type="entry name" value="YbaB-like"/>
    <property type="match status" value="1"/>
</dbReference>
<keyword id="KW-0963">Cytoplasm</keyword>
<keyword id="KW-0238">DNA-binding</keyword>
<name>Y020_PROM9</name>
<feature type="chain" id="PRO_1000003796" description="Nucleoid-associated protein PMT9312_0020">
    <location>
        <begin position="1"/>
        <end position="116"/>
    </location>
</feature>
<reference key="1">
    <citation type="journal article" date="2006" name="Science">
        <title>Genomic islands and the ecology and evolution of Prochlorococcus.</title>
        <authorList>
            <person name="Coleman M.L."/>
            <person name="Sullivan M.B."/>
            <person name="Martiny A.C."/>
            <person name="Steglich C."/>
            <person name="Barry K."/>
            <person name="Delong E.F."/>
            <person name="Chisholm S.W."/>
        </authorList>
    </citation>
    <scope>NUCLEOTIDE SEQUENCE [LARGE SCALE GENOMIC DNA]</scope>
    <source>
        <strain>MIT 9312</strain>
    </source>
</reference>
<evidence type="ECO:0000255" key="1">
    <source>
        <dbReference type="HAMAP-Rule" id="MF_00274"/>
    </source>
</evidence>
<accession>Q31DG4</accession>
<proteinExistence type="inferred from homology"/>
<organism>
    <name type="scientific">Prochlorococcus marinus (strain MIT 9312)</name>
    <dbReference type="NCBI Taxonomy" id="74546"/>
    <lineage>
        <taxon>Bacteria</taxon>
        <taxon>Bacillati</taxon>
        <taxon>Cyanobacteriota</taxon>
        <taxon>Cyanophyceae</taxon>
        <taxon>Synechococcales</taxon>
        <taxon>Prochlorococcaceae</taxon>
        <taxon>Prochlorococcus</taxon>
    </lineage>
</organism>
<protein>
    <recommendedName>
        <fullName evidence="1">Nucleoid-associated protein PMT9312_0020</fullName>
    </recommendedName>
</protein>
<comment type="function">
    <text evidence="1">Binds to DNA and alters its conformation. May be involved in regulation of gene expression, nucleoid organization and DNA protection.</text>
</comment>
<comment type="subunit">
    <text evidence="1">Homodimer.</text>
</comment>
<comment type="subcellular location">
    <subcellularLocation>
        <location evidence="1">Cytoplasm</location>
        <location evidence="1">Nucleoid</location>
    </subcellularLocation>
</comment>
<comment type="similarity">
    <text evidence="1">Belongs to the YbaB/EbfC family.</text>
</comment>
<sequence length="116" mass="13078">MAGFGLPNFGQLTEAFKKAKQIQQDAQKLQDELENMEIEGESDDEMVKVWISGNQLPLRVEVQENILNSDKEKIEQNILQAIQKAHELSTTTMKERMNDLTGGLNLNLPGFDNTDS</sequence>
<gene>
    <name type="ordered locus">PMT9312_0020</name>
</gene>